<name>PELO_THEKO</name>
<comment type="function">
    <text evidence="1">May function in recognizing stalled ribosomes, interact with stem-loop structures in stalled mRNA molecules, and effect endonucleolytic cleavage of the mRNA. May play a role in the release non-functional ribosomes and degradation of damaged mRNAs. Has endoribonuclease activity.</text>
</comment>
<comment type="cofactor">
    <cofactor evidence="1">
        <name>a divalent metal cation</name>
        <dbReference type="ChEBI" id="CHEBI:60240"/>
    </cofactor>
</comment>
<comment type="subunit">
    <text evidence="1">Monomer.</text>
</comment>
<comment type="subcellular location">
    <subcellularLocation>
        <location evidence="1">Cytoplasm</location>
    </subcellularLocation>
</comment>
<comment type="domain">
    <text evidence="1">The N-terminal domain has the RNA-binding Sm fold. It harbors the endoribonuclease activity.</text>
</comment>
<comment type="similarity">
    <text evidence="1">Belongs to the eukaryotic release factor 1 family. Pelota subfamily.</text>
</comment>
<sequence>MQILEEKPKEGKVKVKAETLDDLWHLYHIIDPGDIVYAKTLRKQAQRADSLRAEKVEVIPVFLGVQAEKINFHKFANQVRVTGPIVYASREDVPLGKYHTIAIEQGTVVTIQKPRWKEHHIERLKEAVAASKRARVMIVVIDDGEADMALVREYGVEILNSIRHNLGGKRYNTDRESEEMKFFHDVAKTMEEVMKRENVEKAIVAGPGFVKEDFYKFLKEKYPELAKKVVIEDTSVTGRTGIYEVIKRGVVDRVYQENRVAKEVQLVEKVLENIARNNGLVAYGLKEVEEAVNYGAVETLLVLDELLKGELREKVEELMDAVRYSRGEVVVVSSEHEGGEKLKALGGLAALLRFRVK</sequence>
<accession>Q5JIB9</accession>
<keyword id="KW-0002">3D-structure</keyword>
<keyword id="KW-0963">Cytoplasm</keyword>
<keyword id="KW-0255">Endonuclease</keyword>
<keyword id="KW-0378">Hydrolase</keyword>
<keyword id="KW-0479">Metal-binding</keyword>
<keyword id="KW-0540">Nuclease</keyword>
<keyword id="KW-1185">Reference proteome</keyword>
<evidence type="ECO:0000255" key="1">
    <source>
        <dbReference type="HAMAP-Rule" id="MF_01853"/>
    </source>
</evidence>
<organism>
    <name type="scientific">Thermococcus kodakarensis (strain ATCC BAA-918 / JCM 12380 / KOD1)</name>
    <name type="common">Pyrococcus kodakaraensis (strain KOD1)</name>
    <dbReference type="NCBI Taxonomy" id="69014"/>
    <lineage>
        <taxon>Archaea</taxon>
        <taxon>Methanobacteriati</taxon>
        <taxon>Methanobacteriota</taxon>
        <taxon>Thermococci</taxon>
        <taxon>Thermococcales</taxon>
        <taxon>Thermococcaceae</taxon>
        <taxon>Thermococcus</taxon>
    </lineage>
</organism>
<feature type="chain" id="PRO_0000361820" description="Protein pelota homolog">
    <location>
        <begin position="1"/>
        <end position="357"/>
    </location>
</feature>
<gene>
    <name evidence="1" type="primary">pelA</name>
    <name type="ordered locus">TK0964</name>
</gene>
<dbReference type="EC" id="3.1.-.-" evidence="1"/>
<dbReference type="EMBL" id="AP006878">
    <property type="protein sequence ID" value="BAD85153.1"/>
    <property type="molecule type" value="Genomic_DNA"/>
</dbReference>
<dbReference type="RefSeq" id="WP_011249915.1">
    <property type="nucleotide sequence ID" value="NC_006624.1"/>
</dbReference>
<dbReference type="PDB" id="3J15">
    <property type="method" value="EM"/>
    <property type="resolution" value="6.60 A"/>
    <property type="chains" value="A=2-357"/>
</dbReference>
<dbReference type="PDBsum" id="3J15"/>
<dbReference type="SMR" id="Q5JIB9"/>
<dbReference type="FunCoup" id="Q5JIB9">
    <property type="interactions" value="106"/>
</dbReference>
<dbReference type="STRING" id="69014.TK0964"/>
<dbReference type="EnsemblBacteria" id="BAD85153">
    <property type="protein sequence ID" value="BAD85153"/>
    <property type="gene ID" value="TK0964"/>
</dbReference>
<dbReference type="GeneID" id="78447477"/>
<dbReference type="KEGG" id="tko:TK0964"/>
<dbReference type="PATRIC" id="fig|69014.16.peg.942"/>
<dbReference type="eggNOG" id="arCOG01741">
    <property type="taxonomic scope" value="Archaea"/>
</dbReference>
<dbReference type="HOGENOM" id="CLU_023334_0_0_2"/>
<dbReference type="InParanoid" id="Q5JIB9"/>
<dbReference type="OrthoDB" id="31300at2157"/>
<dbReference type="PhylomeDB" id="Q5JIB9"/>
<dbReference type="EvolutionaryTrace" id="Q5JIB9"/>
<dbReference type="Proteomes" id="UP000000536">
    <property type="component" value="Chromosome"/>
</dbReference>
<dbReference type="GO" id="GO:0005737">
    <property type="term" value="C:cytoplasm"/>
    <property type="evidence" value="ECO:0000318"/>
    <property type="project" value="GO_Central"/>
</dbReference>
<dbReference type="GO" id="GO:0004519">
    <property type="term" value="F:endonuclease activity"/>
    <property type="evidence" value="ECO:0007669"/>
    <property type="project" value="UniProtKB-UniRule"/>
</dbReference>
<dbReference type="GO" id="GO:0046872">
    <property type="term" value="F:metal ion binding"/>
    <property type="evidence" value="ECO:0007669"/>
    <property type="project" value="UniProtKB-UniRule"/>
</dbReference>
<dbReference type="GO" id="GO:0070651">
    <property type="term" value="P:nonfunctional rRNA decay"/>
    <property type="evidence" value="ECO:0000318"/>
    <property type="project" value="GO_Central"/>
</dbReference>
<dbReference type="GO" id="GO:0070966">
    <property type="term" value="P:nuclear-transcribed mRNA catabolic process, no-go decay"/>
    <property type="evidence" value="ECO:0000318"/>
    <property type="project" value="GO_Central"/>
</dbReference>
<dbReference type="GO" id="GO:0070481">
    <property type="term" value="P:nuclear-transcribed mRNA catabolic process, non-stop decay"/>
    <property type="evidence" value="ECO:0007669"/>
    <property type="project" value="InterPro"/>
</dbReference>
<dbReference type="GO" id="GO:0032790">
    <property type="term" value="P:ribosome disassembly"/>
    <property type="evidence" value="ECO:0000318"/>
    <property type="project" value="GO_Central"/>
</dbReference>
<dbReference type="GO" id="GO:0071025">
    <property type="term" value="P:RNA surveillance"/>
    <property type="evidence" value="ECO:0007669"/>
    <property type="project" value="InterPro"/>
</dbReference>
<dbReference type="FunFam" id="2.30.30.870:FF:000002">
    <property type="entry name" value="Protein pelota homolog"/>
    <property type="match status" value="1"/>
</dbReference>
<dbReference type="FunFam" id="3.30.1330.30:FF:000059">
    <property type="entry name" value="Protein pelota homolog"/>
    <property type="match status" value="1"/>
</dbReference>
<dbReference type="FunFam" id="3.30.420.60:FF:000005">
    <property type="entry name" value="Protein pelota homolog"/>
    <property type="match status" value="1"/>
</dbReference>
<dbReference type="Gene3D" id="3.30.1330.30">
    <property type="match status" value="1"/>
</dbReference>
<dbReference type="Gene3D" id="3.30.420.60">
    <property type="entry name" value="eRF1 domain 2"/>
    <property type="match status" value="1"/>
</dbReference>
<dbReference type="Gene3D" id="2.30.30.870">
    <property type="entry name" value="Pelota, domain A"/>
    <property type="match status" value="1"/>
</dbReference>
<dbReference type="HAMAP" id="MF_01853">
    <property type="entry name" value="PelO"/>
    <property type="match status" value="1"/>
</dbReference>
<dbReference type="InterPro" id="IPR042226">
    <property type="entry name" value="eFR1_2_sf"/>
</dbReference>
<dbReference type="InterPro" id="IPR005140">
    <property type="entry name" value="eRF1_1_Pelota"/>
</dbReference>
<dbReference type="InterPro" id="IPR005141">
    <property type="entry name" value="eRF1_2"/>
</dbReference>
<dbReference type="InterPro" id="IPR005142">
    <property type="entry name" value="eRF1_3"/>
</dbReference>
<dbReference type="InterPro" id="IPR038069">
    <property type="entry name" value="Pelota/DOM34_N"/>
</dbReference>
<dbReference type="InterPro" id="IPR023521">
    <property type="entry name" value="Pelota_arc"/>
</dbReference>
<dbReference type="InterPro" id="IPR029064">
    <property type="entry name" value="Ribosomal_eL30-like_sf"/>
</dbReference>
<dbReference type="InterPro" id="IPR004405">
    <property type="entry name" value="Transl-rel_pelota"/>
</dbReference>
<dbReference type="NCBIfam" id="TIGR00111">
    <property type="entry name" value="pelota"/>
    <property type="match status" value="1"/>
</dbReference>
<dbReference type="PANTHER" id="PTHR10853">
    <property type="entry name" value="PELOTA"/>
    <property type="match status" value="1"/>
</dbReference>
<dbReference type="PANTHER" id="PTHR10853:SF0">
    <property type="entry name" value="PROTEIN PELOTA HOMOLOG"/>
    <property type="match status" value="1"/>
</dbReference>
<dbReference type="Pfam" id="PF03463">
    <property type="entry name" value="eRF1_1"/>
    <property type="match status" value="1"/>
</dbReference>
<dbReference type="Pfam" id="PF03464">
    <property type="entry name" value="eRF1_2"/>
    <property type="match status" value="1"/>
</dbReference>
<dbReference type="Pfam" id="PF03465">
    <property type="entry name" value="eRF1_3"/>
    <property type="match status" value="1"/>
</dbReference>
<dbReference type="SMART" id="SM01194">
    <property type="entry name" value="eRF1_1"/>
    <property type="match status" value="1"/>
</dbReference>
<dbReference type="SUPFAM" id="SSF159065">
    <property type="entry name" value="Dom34/Pelota N-terminal domain-like"/>
    <property type="match status" value="1"/>
</dbReference>
<dbReference type="SUPFAM" id="SSF55315">
    <property type="entry name" value="L30e-like"/>
    <property type="match status" value="1"/>
</dbReference>
<dbReference type="SUPFAM" id="SSF53137">
    <property type="entry name" value="Translational machinery components"/>
    <property type="match status" value="1"/>
</dbReference>
<protein>
    <recommendedName>
        <fullName evidence="1">Protein pelota homolog</fullName>
        <ecNumber evidence="1">3.1.-.-</ecNumber>
    </recommendedName>
</protein>
<proteinExistence type="evidence at protein level"/>
<reference key="1">
    <citation type="journal article" date="2005" name="Genome Res.">
        <title>Complete genome sequence of the hyperthermophilic archaeon Thermococcus kodakaraensis KOD1 and comparison with Pyrococcus genomes.</title>
        <authorList>
            <person name="Fukui T."/>
            <person name="Atomi H."/>
            <person name="Kanai T."/>
            <person name="Matsumi R."/>
            <person name="Fujiwara S."/>
            <person name="Imanaka T."/>
        </authorList>
    </citation>
    <scope>NUCLEOTIDE SEQUENCE [LARGE SCALE GENOMIC DNA]</scope>
    <source>
        <strain>ATCC BAA-918 / JCM 12380 / KOD1</strain>
    </source>
</reference>